<proteinExistence type="inferred from homology"/>
<protein>
    <recommendedName>
        <fullName evidence="1">Nucleoside triphosphate/diphosphate phosphatase</fullName>
        <ecNumber evidence="1">3.6.1.15</ecNumber>
        <ecNumber evidence="1">3.6.1.6</ecNumber>
    </recommendedName>
</protein>
<gene>
    <name type="ordered locus">MGAS9429_Spy1315</name>
</gene>
<evidence type="ECO:0000255" key="1">
    <source>
        <dbReference type="HAMAP-Rule" id="MF_01568"/>
    </source>
</evidence>
<sequence>MKLPKEGDFITIQSYKHDGSLHRTWRDTMVLKTTENALIGVNDHTLVTESDGRRWVTREPAIVYFHKKYWFNIIAMIRDNGVSYYCNLASPYMMDTEALKYIDYDLDVKVFADGEKRLLDVDEYEIHKKEMQYSADMDFILKENVKILVDWINHEKGPFSKAYITIWYKRYLELKNR</sequence>
<accession>Q1JKR7</accession>
<keyword id="KW-0378">Hydrolase</keyword>
<keyword id="KW-0460">Magnesium</keyword>
<keyword id="KW-0479">Metal-binding</keyword>
<name>NTDP_STRPC</name>
<feature type="chain" id="PRO_0000248126" description="Nucleoside triphosphate/diphosphate phosphatase">
    <location>
        <begin position="1"/>
        <end position="177"/>
    </location>
</feature>
<feature type="active site" description="Proton donor" evidence="1">
    <location>
        <position position="23"/>
    </location>
</feature>
<feature type="binding site" evidence="1">
    <location>
        <position position="87"/>
    </location>
    <ligand>
        <name>Mg(2+)</name>
        <dbReference type="ChEBI" id="CHEBI:18420"/>
        <label>1</label>
    </ligand>
</feature>
<feature type="binding site" evidence="1">
    <location>
        <position position="103"/>
    </location>
    <ligand>
        <name>Mg(2+)</name>
        <dbReference type="ChEBI" id="CHEBI:18420"/>
        <label>1</label>
    </ligand>
</feature>
<feature type="binding site" evidence="1">
    <location>
        <position position="105"/>
    </location>
    <ligand>
        <name>Mg(2+)</name>
        <dbReference type="ChEBI" id="CHEBI:18420"/>
        <label>2</label>
    </ligand>
</feature>
<feature type="binding site" evidence="1">
    <location>
        <position position="107"/>
    </location>
    <ligand>
        <name>Mg(2+)</name>
        <dbReference type="ChEBI" id="CHEBI:18420"/>
        <label>1</label>
    </ligand>
</feature>
<feature type="binding site" evidence="1">
    <location>
        <position position="107"/>
    </location>
    <ligand>
        <name>Mg(2+)</name>
        <dbReference type="ChEBI" id="CHEBI:18420"/>
        <label>2</label>
    </ligand>
</feature>
<feature type="binding site" evidence="1">
    <location>
        <position position="120"/>
    </location>
    <ligand>
        <name>Mg(2+)</name>
        <dbReference type="ChEBI" id="CHEBI:18420"/>
        <label>2</label>
    </ligand>
</feature>
<feature type="binding site" evidence="1">
    <location>
        <position position="123"/>
    </location>
    <ligand>
        <name>Mg(2+)</name>
        <dbReference type="ChEBI" id="CHEBI:18420"/>
        <label>2</label>
    </ligand>
</feature>
<organism>
    <name type="scientific">Streptococcus pyogenes serotype M12 (strain MGAS9429)</name>
    <dbReference type="NCBI Taxonomy" id="370551"/>
    <lineage>
        <taxon>Bacteria</taxon>
        <taxon>Bacillati</taxon>
        <taxon>Bacillota</taxon>
        <taxon>Bacilli</taxon>
        <taxon>Lactobacillales</taxon>
        <taxon>Streptococcaceae</taxon>
        <taxon>Streptococcus</taxon>
    </lineage>
</organism>
<comment type="function">
    <text evidence="1">Has nucleoside phosphatase activity towards nucleoside triphosphates and nucleoside diphosphates.</text>
</comment>
<comment type="catalytic activity">
    <reaction evidence="1">
        <text>a ribonucleoside 5'-triphosphate + H2O = a ribonucleoside 5'-diphosphate + phosphate + H(+)</text>
        <dbReference type="Rhea" id="RHEA:23680"/>
        <dbReference type="ChEBI" id="CHEBI:15377"/>
        <dbReference type="ChEBI" id="CHEBI:15378"/>
        <dbReference type="ChEBI" id="CHEBI:43474"/>
        <dbReference type="ChEBI" id="CHEBI:57930"/>
        <dbReference type="ChEBI" id="CHEBI:61557"/>
        <dbReference type="EC" id="3.6.1.15"/>
    </reaction>
</comment>
<comment type="catalytic activity">
    <reaction evidence="1">
        <text>a ribonucleoside 5'-diphosphate + H2O = a ribonucleoside 5'-phosphate + phosphate + H(+)</text>
        <dbReference type="Rhea" id="RHEA:36799"/>
        <dbReference type="ChEBI" id="CHEBI:15377"/>
        <dbReference type="ChEBI" id="CHEBI:15378"/>
        <dbReference type="ChEBI" id="CHEBI:43474"/>
        <dbReference type="ChEBI" id="CHEBI:57930"/>
        <dbReference type="ChEBI" id="CHEBI:58043"/>
        <dbReference type="EC" id="3.6.1.6"/>
    </reaction>
</comment>
<comment type="cofactor">
    <cofactor evidence="1">
        <name>Mg(2+)</name>
        <dbReference type="ChEBI" id="CHEBI:18420"/>
    </cofactor>
</comment>
<comment type="similarity">
    <text evidence="1">Belongs to the Ntdp family.</text>
</comment>
<dbReference type="EC" id="3.6.1.15" evidence="1"/>
<dbReference type="EC" id="3.6.1.6" evidence="1"/>
<dbReference type="EMBL" id="CP000259">
    <property type="protein sequence ID" value="ABF32502.1"/>
    <property type="molecule type" value="Genomic_DNA"/>
</dbReference>
<dbReference type="RefSeq" id="WP_002983693.1">
    <property type="nucleotide sequence ID" value="NC_008021.1"/>
</dbReference>
<dbReference type="SMR" id="Q1JKR7"/>
<dbReference type="KEGG" id="spk:MGAS9429_Spy1315"/>
<dbReference type="HOGENOM" id="CLU_109787_1_0_9"/>
<dbReference type="Proteomes" id="UP000002433">
    <property type="component" value="Chromosome"/>
</dbReference>
<dbReference type="GO" id="GO:0000287">
    <property type="term" value="F:magnesium ion binding"/>
    <property type="evidence" value="ECO:0007669"/>
    <property type="project" value="UniProtKB-UniRule"/>
</dbReference>
<dbReference type="GO" id="GO:0017110">
    <property type="term" value="F:nucleoside diphosphate phosphatase activity"/>
    <property type="evidence" value="ECO:0007669"/>
    <property type="project" value="UniProtKB-UniRule"/>
</dbReference>
<dbReference type="GO" id="GO:0017111">
    <property type="term" value="F:ribonucleoside triphosphate phosphatase activity"/>
    <property type="evidence" value="ECO:0007669"/>
    <property type="project" value="UniProtKB-UniRule"/>
</dbReference>
<dbReference type="Gene3D" id="2.40.380.10">
    <property type="entry name" value="FomD-like"/>
    <property type="match status" value="1"/>
</dbReference>
<dbReference type="HAMAP" id="MF_01568">
    <property type="entry name" value="Ntdp"/>
    <property type="match status" value="1"/>
</dbReference>
<dbReference type="InterPro" id="IPR007295">
    <property type="entry name" value="DUF402"/>
</dbReference>
<dbReference type="InterPro" id="IPR035930">
    <property type="entry name" value="FomD-like_sf"/>
</dbReference>
<dbReference type="InterPro" id="IPR050212">
    <property type="entry name" value="Ntdp-like"/>
</dbReference>
<dbReference type="InterPro" id="IPR016882">
    <property type="entry name" value="SA1684"/>
</dbReference>
<dbReference type="NCBIfam" id="NF010183">
    <property type="entry name" value="PRK13662.1"/>
    <property type="match status" value="1"/>
</dbReference>
<dbReference type="PANTHER" id="PTHR39159">
    <property type="match status" value="1"/>
</dbReference>
<dbReference type="PANTHER" id="PTHR39159:SF1">
    <property type="entry name" value="UPF0374 PROTEIN YGAC"/>
    <property type="match status" value="1"/>
</dbReference>
<dbReference type="Pfam" id="PF04167">
    <property type="entry name" value="DUF402"/>
    <property type="match status" value="1"/>
</dbReference>
<dbReference type="PIRSF" id="PIRSF028345">
    <property type="entry name" value="UCP028345"/>
    <property type="match status" value="1"/>
</dbReference>
<dbReference type="SUPFAM" id="SSF159234">
    <property type="entry name" value="FomD-like"/>
    <property type="match status" value="1"/>
</dbReference>
<reference key="1">
    <citation type="journal article" date="2006" name="Proc. Natl. Acad. Sci. U.S.A.">
        <title>Molecular genetic anatomy of inter- and intraserotype variation in the human bacterial pathogen group A Streptococcus.</title>
        <authorList>
            <person name="Beres S.B."/>
            <person name="Richter E.W."/>
            <person name="Nagiec M.J."/>
            <person name="Sumby P."/>
            <person name="Porcella S.F."/>
            <person name="DeLeo F.R."/>
            <person name="Musser J.M."/>
        </authorList>
    </citation>
    <scope>NUCLEOTIDE SEQUENCE [LARGE SCALE GENOMIC DNA]</scope>
    <source>
        <strain>MGAS9429</strain>
    </source>
</reference>